<accession>C4XWY8</accession>
<proteinExistence type="inferred from homology"/>
<dbReference type="EMBL" id="CH408076">
    <property type="protein sequence ID" value="EEQ36337.1"/>
    <property type="molecule type" value="Genomic_DNA"/>
</dbReference>
<dbReference type="RefSeq" id="XP_002619301.1">
    <property type="nucleotide sequence ID" value="XM_002619255.1"/>
</dbReference>
<dbReference type="FunCoup" id="C4XWY8">
    <property type="interactions" value="1227"/>
</dbReference>
<dbReference type="STRING" id="306902.C4XWY8"/>
<dbReference type="GeneID" id="8499656"/>
<dbReference type="KEGG" id="clu:CLUG_00461"/>
<dbReference type="VEuPathDB" id="FungiDB:CLUG_00461"/>
<dbReference type="HOGENOM" id="CLU_018705_0_1_1"/>
<dbReference type="InParanoid" id="C4XWY8"/>
<dbReference type="OMA" id="QDRGDTF"/>
<dbReference type="OrthoDB" id="111614at4891"/>
<dbReference type="Proteomes" id="UP000007703">
    <property type="component" value="Unassembled WGS sequence"/>
</dbReference>
<dbReference type="GO" id="GO:0005730">
    <property type="term" value="C:nucleolus"/>
    <property type="evidence" value="ECO:0007669"/>
    <property type="project" value="UniProtKB-SubCell"/>
</dbReference>
<dbReference type="GO" id="GO:0032040">
    <property type="term" value="C:small-subunit processome"/>
    <property type="evidence" value="ECO:0007669"/>
    <property type="project" value="EnsemblFungi"/>
</dbReference>
<dbReference type="GO" id="GO:0019843">
    <property type="term" value="F:rRNA binding"/>
    <property type="evidence" value="ECO:0007669"/>
    <property type="project" value="EnsemblFungi"/>
</dbReference>
<dbReference type="GO" id="GO:0034511">
    <property type="term" value="F:U3 snoRNA binding"/>
    <property type="evidence" value="ECO:0007669"/>
    <property type="project" value="EnsemblFungi"/>
</dbReference>
<dbReference type="GO" id="GO:0000462">
    <property type="term" value="P:maturation of SSU-rRNA from tricistronic rRNA transcript (SSU-rRNA, 5.8S rRNA, LSU-rRNA)"/>
    <property type="evidence" value="ECO:0007669"/>
    <property type="project" value="EnsemblFungi"/>
</dbReference>
<dbReference type="Gene3D" id="3.40.50.300">
    <property type="entry name" value="P-loop containing nucleotide triphosphate hydrolases"/>
    <property type="match status" value="1"/>
</dbReference>
<dbReference type="InterPro" id="IPR027417">
    <property type="entry name" value="P-loop_NTPase"/>
</dbReference>
<dbReference type="InterPro" id="IPR010678">
    <property type="entry name" value="UTP25"/>
</dbReference>
<dbReference type="InterPro" id="IPR053939">
    <property type="entry name" value="UTP25_C"/>
</dbReference>
<dbReference type="InterPro" id="IPR053940">
    <property type="entry name" value="UTP25_NTPase-like"/>
</dbReference>
<dbReference type="PANTHER" id="PTHR12933">
    <property type="entry name" value="ORF PROTEIN-RELATED"/>
    <property type="match status" value="1"/>
</dbReference>
<dbReference type="PANTHER" id="PTHR12933:SF0">
    <property type="entry name" value="U3 SMALL NUCLEOLAR RNA-ASSOCIATED PROTEIN 25 HOMOLOG"/>
    <property type="match status" value="1"/>
</dbReference>
<dbReference type="Pfam" id="PF06862">
    <property type="entry name" value="Utp25_C"/>
    <property type="match status" value="1"/>
</dbReference>
<dbReference type="Pfam" id="PF22916">
    <property type="entry name" value="UTP25_NTPase-like"/>
    <property type="match status" value="1"/>
</dbReference>
<comment type="function">
    <text evidence="1">DEAD-box RNA helicase-like protein required for pre-18S rRNA processing, specifically at sites A0, A1, and A2.</text>
</comment>
<comment type="subunit">
    <text evidence="1">Component of the ribosomal small subunit (SSU) processome composed of at least 40 protein subunits and snoRNA U3.</text>
</comment>
<comment type="subcellular location">
    <subcellularLocation>
        <location evidence="1">Nucleus</location>
        <location evidence="1">Nucleolus</location>
    </subcellularLocation>
</comment>
<comment type="similarity">
    <text evidence="3">Belongs to the UTP25 family.</text>
</comment>
<organism>
    <name type="scientific">Clavispora lusitaniae (strain ATCC 42720)</name>
    <name type="common">Yeast</name>
    <name type="synonym">Candida lusitaniae</name>
    <dbReference type="NCBI Taxonomy" id="306902"/>
    <lineage>
        <taxon>Eukaryota</taxon>
        <taxon>Fungi</taxon>
        <taxon>Dikarya</taxon>
        <taxon>Ascomycota</taxon>
        <taxon>Saccharomycotina</taxon>
        <taxon>Pichiomycetes</taxon>
        <taxon>Metschnikowiaceae</taxon>
        <taxon>Clavispora</taxon>
    </lineage>
</organism>
<gene>
    <name type="primary">UTP25</name>
    <name type="ORF">CLUG_00461</name>
</gene>
<sequence>MKRPGSNKRPAKSKDGAESRPKRANRGRQQLRTITRTARRDVDAPVEETPESSESEAEEAAPEEKKFEQGKAYDALLTLLQSEHPEKSDKKKTASRHEEDDVAGVNLEEDDDDDDEEEEEEENDEVEDDANEHGDPFEVHFGVDDEAVAAKAALLSARWPVAHKAKVGAYAVTTHASPGEKTAACEAPRAQTLGAPVKKRVADAFAARHPAPFSPLEQELAHHIFSYRDVLYASRTYDNTVHRKLYAAHVLNHVFKTRDRVLKNNDVLKNYHSAQQQGKATGPEPEPRDQGFTRPKVLILLPTRNAAYEVVEQLIGMSGAAQQENRRRFKAQFHADGGPPDSKPADFRAMFHGNSNDFFSIGLKFTRKSVKLYASFYGADILVASPIGLAMILEDPKQAKREYDFLSSIEVLVVDRANELEMQNWDHVHTVLRYINKIPKDFHGADFSRIRMWAINDHARLLRQTLVFCDFLTPSVSNVITHSQNIAGKTRFRPETTAQTCVMNSVGLRLKQIFQRFDAPDPQSSVDARFRFFVNSVLPSLSKQTSYDDGLLIYVPSYFDYVRLKAHMKTHTKLDFSAIDEYSSRAKITRARHFFSTGKTKLLLYTERLHHYRRFELAGVKNIVLYGPPENPLFYKELLRFVGKSVFKGDADTDLSFIKTIYCKWDAAALERICGAEKAAVLCNSVNEMFEFR</sequence>
<feature type="chain" id="PRO_0000408113" description="U3 small nucleolar RNA-associated protein 25">
    <location>
        <begin position="1"/>
        <end position="693"/>
    </location>
</feature>
<feature type="region of interest" description="Disordered" evidence="2">
    <location>
        <begin position="1"/>
        <end position="138"/>
    </location>
</feature>
<feature type="region of interest" description="Disordered" evidence="2">
    <location>
        <begin position="273"/>
        <end position="292"/>
    </location>
</feature>
<feature type="compositionally biased region" description="Basic residues" evidence="2">
    <location>
        <begin position="1"/>
        <end position="11"/>
    </location>
</feature>
<feature type="compositionally biased region" description="Basic and acidic residues" evidence="2">
    <location>
        <begin position="12"/>
        <end position="21"/>
    </location>
</feature>
<feature type="compositionally biased region" description="Polar residues" evidence="2">
    <location>
        <begin position="27"/>
        <end position="36"/>
    </location>
</feature>
<feature type="compositionally biased region" description="Acidic residues" evidence="2">
    <location>
        <begin position="44"/>
        <end position="61"/>
    </location>
</feature>
<feature type="compositionally biased region" description="Basic and acidic residues" evidence="2">
    <location>
        <begin position="62"/>
        <end position="71"/>
    </location>
</feature>
<feature type="compositionally biased region" description="Basic and acidic residues" evidence="2">
    <location>
        <begin position="83"/>
        <end position="99"/>
    </location>
</feature>
<feature type="compositionally biased region" description="Acidic residues" evidence="2">
    <location>
        <begin position="107"/>
        <end position="130"/>
    </location>
</feature>
<evidence type="ECO:0000250" key="1"/>
<evidence type="ECO:0000256" key="2">
    <source>
        <dbReference type="SAM" id="MobiDB-lite"/>
    </source>
</evidence>
<evidence type="ECO:0000305" key="3"/>
<protein>
    <recommendedName>
        <fullName>U3 small nucleolar RNA-associated protein 25</fullName>
        <shortName>U3 snoRNA-associated protein 25</shortName>
    </recommendedName>
    <alternativeName>
        <fullName>U three protein 25</fullName>
    </alternativeName>
</protein>
<reference key="1">
    <citation type="journal article" date="2009" name="Nature">
        <title>Evolution of pathogenicity and sexual reproduction in eight Candida genomes.</title>
        <authorList>
            <person name="Butler G."/>
            <person name="Rasmussen M.D."/>
            <person name="Lin M.F."/>
            <person name="Santos M.A.S."/>
            <person name="Sakthikumar S."/>
            <person name="Munro C.A."/>
            <person name="Rheinbay E."/>
            <person name="Grabherr M."/>
            <person name="Forche A."/>
            <person name="Reedy J.L."/>
            <person name="Agrafioti I."/>
            <person name="Arnaud M.B."/>
            <person name="Bates S."/>
            <person name="Brown A.J.P."/>
            <person name="Brunke S."/>
            <person name="Costanzo M.C."/>
            <person name="Fitzpatrick D.A."/>
            <person name="de Groot P.W.J."/>
            <person name="Harris D."/>
            <person name="Hoyer L.L."/>
            <person name="Hube B."/>
            <person name="Klis F.M."/>
            <person name="Kodira C."/>
            <person name="Lennard N."/>
            <person name="Logue M.E."/>
            <person name="Martin R."/>
            <person name="Neiman A.M."/>
            <person name="Nikolaou E."/>
            <person name="Quail M.A."/>
            <person name="Quinn J."/>
            <person name="Santos M.C."/>
            <person name="Schmitzberger F.F."/>
            <person name="Sherlock G."/>
            <person name="Shah P."/>
            <person name="Silverstein K.A.T."/>
            <person name="Skrzypek M.S."/>
            <person name="Soll D."/>
            <person name="Staggs R."/>
            <person name="Stansfield I."/>
            <person name="Stumpf M.P.H."/>
            <person name="Sudbery P.E."/>
            <person name="Srikantha T."/>
            <person name="Zeng Q."/>
            <person name="Berman J."/>
            <person name="Berriman M."/>
            <person name="Heitman J."/>
            <person name="Gow N.A.R."/>
            <person name="Lorenz M.C."/>
            <person name="Birren B.W."/>
            <person name="Kellis M."/>
            <person name="Cuomo C.A."/>
        </authorList>
    </citation>
    <scope>NUCLEOTIDE SEQUENCE [LARGE SCALE GENOMIC DNA]</scope>
    <source>
        <strain>ATCC 42720</strain>
    </source>
</reference>
<keyword id="KW-0539">Nucleus</keyword>
<keyword id="KW-1185">Reference proteome</keyword>
<keyword id="KW-0687">Ribonucleoprotein</keyword>
<keyword id="KW-0690">Ribosome biogenesis</keyword>
<keyword id="KW-0698">rRNA processing</keyword>
<name>UTP25_CLAL4</name>